<keyword id="KW-0067">ATP-binding</keyword>
<keyword id="KW-0963">Cytoplasm</keyword>
<keyword id="KW-0418">Kinase</keyword>
<keyword id="KW-0545">Nucleotide biosynthesis</keyword>
<keyword id="KW-0547">Nucleotide-binding</keyword>
<keyword id="KW-1185">Reference proteome</keyword>
<keyword id="KW-0808">Transferase</keyword>
<protein>
    <recommendedName>
        <fullName evidence="1">Adenylate kinase</fullName>
        <shortName evidence="1">AK</shortName>
        <ecNumber evidence="1">2.7.4.3</ecNumber>
    </recommendedName>
    <alternativeName>
        <fullName evidence="1">ATP-AMP transphosphorylase</fullName>
    </alternativeName>
    <alternativeName>
        <fullName evidence="1">ATP:AMP phosphotransferase</fullName>
    </alternativeName>
    <alternativeName>
        <fullName evidence="1">Adenylate monophosphate kinase</fullName>
    </alternativeName>
</protein>
<name>KAD_SHEAM</name>
<accession>A1S566</accession>
<reference key="1">
    <citation type="submission" date="2006-12" db="EMBL/GenBank/DDBJ databases">
        <title>Complete sequence of Shewanella amazonensis SB2B.</title>
        <authorList>
            <consortium name="US DOE Joint Genome Institute"/>
            <person name="Copeland A."/>
            <person name="Lucas S."/>
            <person name="Lapidus A."/>
            <person name="Barry K."/>
            <person name="Detter J.C."/>
            <person name="Glavina del Rio T."/>
            <person name="Hammon N."/>
            <person name="Israni S."/>
            <person name="Dalin E."/>
            <person name="Tice H."/>
            <person name="Pitluck S."/>
            <person name="Munk A.C."/>
            <person name="Brettin T."/>
            <person name="Bruce D."/>
            <person name="Han C."/>
            <person name="Tapia R."/>
            <person name="Gilna P."/>
            <person name="Schmutz J."/>
            <person name="Larimer F."/>
            <person name="Land M."/>
            <person name="Hauser L."/>
            <person name="Kyrpides N."/>
            <person name="Mikhailova N."/>
            <person name="Fredrickson J."/>
            <person name="Richardson P."/>
        </authorList>
    </citation>
    <scope>NUCLEOTIDE SEQUENCE [LARGE SCALE GENOMIC DNA]</scope>
    <source>
        <strain>ATCC BAA-1098 / SB2B</strain>
    </source>
</reference>
<sequence length="214" mass="23154">MRIILLGAPGAGKGTQAQFIMEHYGIPQISTGDMLRAAVKAGTPLGLEAKKVMDAGQLVSDELIIGLVKERIAQDDCANGFLLDGFPRTIPQADAMAANGISIDHVIEIDVPDEEIVNRMSGRRVHPGSGRVYHVVFNPPKVEGKDDVTGEDLVIRPDDEESTVRKRLGIYHEQTKPLVDYYGKVAAEGNTKYTKFDGTQSVAEVSKLIQAALS</sequence>
<dbReference type="EC" id="2.7.4.3" evidence="1"/>
<dbReference type="EMBL" id="CP000507">
    <property type="protein sequence ID" value="ABL99522.1"/>
    <property type="molecule type" value="Genomic_DNA"/>
</dbReference>
<dbReference type="RefSeq" id="WP_011759431.1">
    <property type="nucleotide sequence ID" value="NC_008700.1"/>
</dbReference>
<dbReference type="SMR" id="A1S566"/>
<dbReference type="STRING" id="326297.Sama_1315"/>
<dbReference type="KEGG" id="saz:Sama_1315"/>
<dbReference type="eggNOG" id="COG0563">
    <property type="taxonomic scope" value="Bacteria"/>
</dbReference>
<dbReference type="HOGENOM" id="CLU_032354_1_2_6"/>
<dbReference type="OrthoDB" id="9805030at2"/>
<dbReference type="UniPathway" id="UPA00588">
    <property type="reaction ID" value="UER00649"/>
</dbReference>
<dbReference type="Proteomes" id="UP000009175">
    <property type="component" value="Chromosome"/>
</dbReference>
<dbReference type="GO" id="GO:0005737">
    <property type="term" value="C:cytoplasm"/>
    <property type="evidence" value="ECO:0007669"/>
    <property type="project" value="UniProtKB-SubCell"/>
</dbReference>
<dbReference type="GO" id="GO:0004017">
    <property type="term" value="F:adenylate kinase activity"/>
    <property type="evidence" value="ECO:0007669"/>
    <property type="project" value="UniProtKB-UniRule"/>
</dbReference>
<dbReference type="GO" id="GO:0005524">
    <property type="term" value="F:ATP binding"/>
    <property type="evidence" value="ECO:0007669"/>
    <property type="project" value="UniProtKB-UniRule"/>
</dbReference>
<dbReference type="GO" id="GO:0044209">
    <property type="term" value="P:AMP salvage"/>
    <property type="evidence" value="ECO:0007669"/>
    <property type="project" value="UniProtKB-UniRule"/>
</dbReference>
<dbReference type="CDD" id="cd01428">
    <property type="entry name" value="ADK"/>
    <property type="match status" value="1"/>
</dbReference>
<dbReference type="FunFam" id="3.40.50.300:FF:000106">
    <property type="entry name" value="Adenylate kinase mitochondrial"/>
    <property type="match status" value="1"/>
</dbReference>
<dbReference type="Gene3D" id="3.40.50.300">
    <property type="entry name" value="P-loop containing nucleotide triphosphate hydrolases"/>
    <property type="match status" value="1"/>
</dbReference>
<dbReference type="HAMAP" id="MF_00235">
    <property type="entry name" value="Adenylate_kinase_Adk"/>
    <property type="match status" value="1"/>
</dbReference>
<dbReference type="InterPro" id="IPR006259">
    <property type="entry name" value="Adenyl_kin_sub"/>
</dbReference>
<dbReference type="InterPro" id="IPR000850">
    <property type="entry name" value="Adenylat/UMP-CMP_kin"/>
</dbReference>
<dbReference type="InterPro" id="IPR033690">
    <property type="entry name" value="Adenylat_kinase_CS"/>
</dbReference>
<dbReference type="InterPro" id="IPR007862">
    <property type="entry name" value="Adenylate_kinase_lid-dom"/>
</dbReference>
<dbReference type="InterPro" id="IPR027417">
    <property type="entry name" value="P-loop_NTPase"/>
</dbReference>
<dbReference type="NCBIfam" id="TIGR01351">
    <property type="entry name" value="adk"/>
    <property type="match status" value="1"/>
</dbReference>
<dbReference type="NCBIfam" id="NF001379">
    <property type="entry name" value="PRK00279.1-1"/>
    <property type="match status" value="1"/>
</dbReference>
<dbReference type="NCBIfam" id="NF001380">
    <property type="entry name" value="PRK00279.1-2"/>
    <property type="match status" value="1"/>
</dbReference>
<dbReference type="NCBIfam" id="NF001381">
    <property type="entry name" value="PRK00279.1-3"/>
    <property type="match status" value="1"/>
</dbReference>
<dbReference type="NCBIfam" id="NF011100">
    <property type="entry name" value="PRK14527.1"/>
    <property type="match status" value="1"/>
</dbReference>
<dbReference type="PANTHER" id="PTHR23359">
    <property type="entry name" value="NUCLEOTIDE KINASE"/>
    <property type="match status" value="1"/>
</dbReference>
<dbReference type="Pfam" id="PF00406">
    <property type="entry name" value="ADK"/>
    <property type="match status" value="1"/>
</dbReference>
<dbReference type="Pfam" id="PF05191">
    <property type="entry name" value="ADK_lid"/>
    <property type="match status" value="1"/>
</dbReference>
<dbReference type="PRINTS" id="PR00094">
    <property type="entry name" value="ADENYLTKNASE"/>
</dbReference>
<dbReference type="SUPFAM" id="SSF52540">
    <property type="entry name" value="P-loop containing nucleoside triphosphate hydrolases"/>
    <property type="match status" value="1"/>
</dbReference>
<dbReference type="PROSITE" id="PS00113">
    <property type="entry name" value="ADENYLATE_KINASE"/>
    <property type="match status" value="1"/>
</dbReference>
<comment type="function">
    <text evidence="1">Catalyzes the reversible transfer of the terminal phosphate group between ATP and AMP. Plays an important role in cellular energy homeostasis and in adenine nucleotide metabolism.</text>
</comment>
<comment type="catalytic activity">
    <reaction evidence="1">
        <text>AMP + ATP = 2 ADP</text>
        <dbReference type="Rhea" id="RHEA:12973"/>
        <dbReference type="ChEBI" id="CHEBI:30616"/>
        <dbReference type="ChEBI" id="CHEBI:456215"/>
        <dbReference type="ChEBI" id="CHEBI:456216"/>
        <dbReference type="EC" id="2.7.4.3"/>
    </reaction>
</comment>
<comment type="pathway">
    <text evidence="1">Purine metabolism; AMP biosynthesis via salvage pathway; AMP from ADP: step 1/1.</text>
</comment>
<comment type="subunit">
    <text evidence="1">Monomer.</text>
</comment>
<comment type="subcellular location">
    <subcellularLocation>
        <location evidence="1">Cytoplasm</location>
    </subcellularLocation>
</comment>
<comment type="domain">
    <text evidence="1">Consists of three domains, a large central CORE domain and two small peripheral domains, NMPbind and LID, which undergo movements during catalysis. The LID domain closes over the site of phosphoryl transfer upon ATP binding. Assembling and dissambling the active center during each catalytic cycle provides an effective means to prevent ATP hydrolysis.</text>
</comment>
<comment type="similarity">
    <text evidence="1">Belongs to the adenylate kinase family.</text>
</comment>
<evidence type="ECO:0000255" key="1">
    <source>
        <dbReference type="HAMAP-Rule" id="MF_00235"/>
    </source>
</evidence>
<proteinExistence type="inferred from homology"/>
<feature type="chain" id="PRO_1000058893" description="Adenylate kinase">
    <location>
        <begin position="1"/>
        <end position="214"/>
    </location>
</feature>
<feature type="region of interest" description="NMP" evidence="1">
    <location>
        <begin position="30"/>
        <end position="59"/>
    </location>
</feature>
<feature type="region of interest" description="LID" evidence="1">
    <location>
        <begin position="122"/>
        <end position="159"/>
    </location>
</feature>
<feature type="binding site" evidence="1">
    <location>
        <begin position="10"/>
        <end position="15"/>
    </location>
    <ligand>
        <name>ATP</name>
        <dbReference type="ChEBI" id="CHEBI:30616"/>
    </ligand>
</feature>
<feature type="binding site" evidence="1">
    <location>
        <position position="31"/>
    </location>
    <ligand>
        <name>AMP</name>
        <dbReference type="ChEBI" id="CHEBI:456215"/>
    </ligand>
</feature>
<feature type="binding site" evidence="1">
    <location>
        <position position="36"/>
    </location>
    <ligand>
        <name>AMP</name>
        <dbReference type="ChEBI" id="CHEBI:456215"/>
    </ligand>
</feature>
<feature type="binding site" evidence="1">
    <location>
        <begin position="57"/>
        <end position="59"/>
    </location>
    <ligand>
        <name>AMP</name>
        <dbReference type="ChEBI" id="CHEBI:456215"/>
    </ligand>
</feature>
<feature type="binding site" evidence="1">
    <location>
        <begin position="85"/>
        <end position="88"/>
    </location>
    <ligand>
        <name>AMP</name>
        <dbReference type="ChEBI" id="CHEBI:456215"/>
    </ligand>
</feature>
<feature type="binding site" evidence="1">
    <location>
        <position position="92"/>
    </location>
    <ligand>
        <name>AMP</name>
        <dbReference type="ChEBI" id="CHEBI:456215"/>
    </ligand>
</feature>
<feature type="binding site" evidence="1">
    <location>
        <position position="123"/>
    </location>
    <ligand>
        <name>ATP</name>
        <dbReference type="ChEBI" id="CHEBI:30616"/>
    </ligand>
</feature>
<feature type="binding site" evidence="1">
    <location>
        <begin position="132"/>
        <end position="133"/>
    </location>
    <ligand>
        <name>ATP</name>
        <dbReference type="ChEBI" id="CHEBI:30616"/>
    </ligand>
</feature>
<feature type="binding site" evidence="1">
    <location>
        <position position="156"/>
    </location>
    <ligand>
        <name>AMP</name>
        <dbReference type="ChEBI" id="CHEBI:456215"/>
    </ligand>
</feature>
<feature type="binding site" evidence="1">
    <location>
        <position position="167"/>
    </location>
    <ligand>
        <name>AMP</name>
        <dbReference type="ChEBI" id="CHEBI:456215"/>
    </ligand>
</feature>
<feature type="binding site" evidence="1">
    <location>
        <position position="200"/>
    </location>
    <ligand>
        <name>ATP</name>
        <dbReference type="ChEBI" id="CHEBI:30616"/>
    </ligand>
</feature>
<organism>
    <name type="scientific">Shewanella amazonensis (strain ATCC BAA-1098 / SB2B)</name>
    <dbReference type="NCBI Taxonomy" id="326297"/>
    <lineage>
        <taxon>Bacteria</taxon>
        <taxon>Pseudomonadati</taxon>
        <taxon>Pseudomonadota</taxon>
        <taxon>Gammaproteobacteria</taxon>
        <taxon>Alteromonadales</taxon>
        <taxon>Shewanellaceae</taxon>
        <taxon>Shewanella</taxon>
    </lineage>
</organism>
<gene>
    <name evidence="1" type="primary">adk</name>
    <name type="ordered locus">Sama_1315</name>
</gene>